<name>YKH1_YEAST</name>
<gene>
    <name type="ordered locus">YKL071W</name>
</gene>
<organism>
    <name type="scientific">Saccharomyces cerevisiae (strain ATCC 204508 / S288c)</name>
    <name type="common">Baker's yeast</name>
    <dbReference type="NCBI Taxonomy" id="559292"/>
    <lineage>
        <taxon>Eukaryota</taxon>
        <taxon>Fungi</taxon>
        <taxon>Dikarya</taxon>
        <taxon>Ascomycota</taxon>
        <taxon>Saccharomycotina</taxon>
        <taxon>Saccharomycetes</taxon>
        <taxon>Saccharomycetales</taxon>
        <taxon>Saccharomycetaceae</taxon>
        <taxon>Saccharomyces</taxon>
    </lineage>
</organism>
<dbReference type="EMBL" id="X75780">
    <property type="protein sequence ID" value="CAA53403.1"/>
    <property type="molecule type" value="Genomic_DNA"/>
</dbReference>
<dbReference type="EMBL" id="Z28071">
    <property type="protein sequence ID" value="CAA81908.1"/>
    <property type="molecule type" value="Genomic_DNA"/>
</dbReference>
<dbReference type="EMBL" id="AY692597">
    <property type="protein sequence ID" value="AAT92616.1"/>
    <property type="molecule type" value="Genomic_DNA"/>
</dbReference>
<dbReference type="EMBL" id="BK006944">
    <property type="protein sequence ID" value="DAA09085.1"/>
    <property type="molecule type" value="Genomic_DNA"/>
</dbReference>
<dbReference type="PIR" id="S37893">
    <property type="entry name" value="S37893"/>
</dbReference>
<dbReference type="SMR" id="P36086"/>
<dbReference type="BioGRID" id="34061">
    <property type="interactions" value="66"/>
</dbReference>
<dbReference type="FunCoup" id="P36086">
    <property type="interactions" value="81"/>
</dbReference>
<dbReference type="IntAct" id="P36086">
    <property type="interactions" value="42"/>
</dbReference>
<dbReference type="STRING" id="4932.YKL071W"/>
<dbReference type="GlyGen" id="P36086">
    <property type="glycosylation" value="2 sites, 1 O-linked glycan (2 sites)"/>
</dbReference>
<dbReference type="iPTMnet" id="P36086"/>
<dbReference type="PaxDb" id="4932-YKL071W"/>
<dbReference type="PeptideAtlas" id="P36086"/>
<dbReference type="EnsemblFungi" id="YKL071W_mRNA">
    <property type="protein sequence ID" value="YKL071W"/>
    <property type="gene ID" value="YKL071W"/>
</dbReference>
<dbReference type="KEGG" id="sce:YKL071W"/>
<dbReference type="AGR" id="SGD:S000001554"/>
<dbReference type="SGD" id="S000001554">
    <property type="gene designation" value="YKL071W"/>
</dbReference>
<dbReference type="VEuPathDB" id="FungiDB:YKL071W"/>
<dbReference type="eggNOG" id="KOG1611">
    <property type="taxonomic scope" value="Eukaryota"/>
</dbReference>
<dbReference type="GeneTree" id="ENSGT00940000165449"/>
<dbReference type="HOGENOM" id="CLU_010194_9_1_1"/>
<dbReference type="InParanoid" id="P36086"/>
<dbReference type="OMA" id="WHREGYE"/>
<dbReference type="OrthoDB" id="4096546at2759"/>
<dbReference type="BioCyc" id="YEAST:G3O-31867-MONOMER"/>
<dbReference type="BioGRID-ORCS" id="853792">
    <property type="hits" value="0 hits in 10 CRISPR screens"/>
</dbReference>
<dbReference type="PRO" id="PR:P36086"/>
<dbReference type="Proteomes" id="UP000002311">
    <property type="component" value="Chromosome XI"/>
</dbReference>
<dbReference type="RNAct" id="P36086">
    <property type="molecule type" value="protein"/>
</dbReference>
<dbReference type="GO" id="GO:0005737">
    <property type="term" value="C:cytoplasm"/>
    <property type="evidence" value="ECO:0007005"/>
    <property type="project" value="SGD"/>
</dbReference>
<dbReference type="GO" id="GO:0004029">
    <property type="term" value="F:aldehyde dehydrogenase (NAD+) activity"/>
    <property type="evidence" value="ECO:0000314"/>
    <property type="project" value="SGD"/>
</dbReference>
<dbReference type="GO" id="GO:0016491">
    <property type="term" value="F:oxidoreductase activity"/>
    <property type="evidence" value="ECO:0000318"/>
    <property type="project" value="GO_Central"/>
</dbReference>
<dbReference type="GO" id="GO:0110095">
    <property type="term" value="P:cellular detoxification of aldehyde"/>
    <property type="evidence" value="ECO:0000315"/>
    <property type="project" value="SGD"/>
</dbReference>
<dbReference type="CDD" id="cd05325">
    <property type="entry name" value="carb_red_sniffer_like_SDR_c"/>
    <property type="match status" value="1"/>
</dbReference>
<dbReference type="FunFam" id="3.40.50.720:FF:000599">
    <property type="entry name" value="Uncharacterized oxidoreductase C663.06c"/>
    <property type="match status" value="1"/>
</dbReference>
<dbReference type="Gene3D" id="3.40.50.720">
    <property type="entry name" value="NAD(P)-binding Rossmann-like Domain"/>
    <property type="match status" value="1"/>
</dbReference>
<dbReference type="InterPro" id="IPR036291">
    <property type="entry name" value="NAD(P)-bd_dom_sf"/>
</dbReference>
<dbReference type="InterPro" id="IPR052184">
    <property type="entry name" value="SDR_enzymes"/>
</dbReference>
<dbReference type="InterPro" id="IPR002347">
    <property type="entry name" value="SDR_fam"/>
</dbReference>
<dbReference type="PANTHER" id="PTHR45458:SF1">
    <property type="entry name" value="SHORT CHAIN DEHYDROGENASE"/>
    <property type="match status" value="1"/>
</dbReference>
<dbReference type="PANTHER" id="PTHR45458">
    <property type="entry name" value="SHORT-CHAIN DEHYDROGENASE/REDUCTASE SDR"/>
    <property type="match status" value="1"/>
</dbReference>
<dbReference type="Pfam" id="PF00106">
    <property type="entry name" value="adh_short"/>
    <property type="match status" value="1"/>
</dbReference>
<dbReference type="PRINTS" id="PR00081">
    <property type="entry name" value="GDHRDH"/>
</dbReference>
<dbReference type="SUPFAM" id="SSF51735">
    <property type="entry name" value="NAD(P)-binding Rossmann-fold domains"/>
    <property type="match status" value="1"/>
</dbReference>
<proteinExistence type="evidence at protein level"/>
<evidence type="ECO:0000250" key="1">
    <source>
        <dbReference type="UniProtKB" id="L0E2Z4"/>
    </source>
</evidence>
<evidence type="ECO:0000250" key="2">
    <source>
        <dbReference type="UniProtKB" id="O93868"/>
    </source>
</evidence>
<evidence type="ECO:0000269" key="3">
    <source>
    </source>
</evidence>
<evidence type="ECO:0000305" key="4"/>
<keyword id="KW-0963">Cytoplasm</keyword>
<keyword id="KW-0521">NADP</keyword>
<keyword id="KW-0560">Oxidoreductase</keyword>
<keyword id="KW-1185">Reference proteome</keyword>
<protein>
    <recommendedName>
        <fullName>Uncharacterized oxidoreductase YKL071W</fullName>
    </recommendedName>
</protein>
<comment type="subcellular location">
    <subcellularLocation>
        <location evidence="3">Cytoplasm</location>
    </subcellularLocation>
</comment>
<comment type="similarity">
    <text evidence="4">Belongs to the short-chain dehydrogenases/reductases (SDR) family.</text>
</comment>
<sequence>MNTSSRITYFIIGGSRGIGFNLVKILSASTGNTVITSIRGSPSLPKNKQVEDLAKIRKNIHIVQLDLTKDESIGNIADEIKKTPFFLGIDIFIACSAVSDSYYKVLETPKSVWLNHYSTNALGPILALQKVYPLLLLKKTRKIFFISSVAGSINAFVPLSVSAYGQSKAALNYAVKTLSFELKPEGFTVVAFHPGMVSTDMGQYGLDHFKEKNIDISGVNIITPEESASALIDVFRKILPEDNGKFFNYDGSEGVF</sequence>
<reference key="1">
    <citation type="journal article" date="1994" name="Yeast">
        <title>Sequence of a 20.7 kb region of yeast chromosome XI includes the NUP100 gene, an open reading frame (ORF) possibly representing a nucleoside diphosphate kinase gene, tRNAs for His, Val and Trp in addition to seven ORFs with weak or no significant similarity to known proteins.</title>
        <authorList>
            <person name="Rasmussen S.W."/>
        </authorList>
    </citation>
    <scope>NUCLEOTIDE SEQUENCE [GENOMIC DNA]</scope>
    <source>
        <strain>ATCC 204508 / S288c</strain>
    </source>
</reference>
<reference key="2">
    <citation type="journal article" date="1994" name="Nature">
        <title>Complete DNA sequence of yeast chromosome XI.</title>
        <authorList>
            <person name="Dujon B."/>
            <person name="Alexandraki D."/>
            <person name="Andre B."/>
            <person name="Ansorge W."/>
            <person name="Baladron V."/>
            <person name="Ballesta J.P.G."/>
            <person name="Banrevi A."/>
            <person name="Bolle P.-A."/>
            <person name="Bolotin-Fukuhara M."/>
            <person name="Bossier P."/>
            <person name="Bou G."/>
            <person name="Boyer J."/>
            <person name="Buitrago M.J."/>
            <person name="Cheret G."/>
            <person name="Colleaux L."/>
            <person name="Daignan-Fornier B."/>
            <person name="del Rey F."/>
            <person name="Dion C."/>
            <person name="Domdey H."/>
            <person name="Duesterhoeft A."/>
            <person name="Duesterhus S."/>
            <person name="Entian K.-D."/>
            <person name="Erfle H."/>
            <person name="Esteban P.F."/>
            <person name="Feldmann H."/>
            <person name="Fernandes L."/>
            <person name="Fobo G.M."/>
            <person name="Fritz C."/>
            <person name="Fukuhara H."/>
            <person name="Gabel C."/>
            <person name="Gaillon L."/>
            <person name="Garcia-Cantalejo J.M."/>
            <person name="Garcia-Ramirez J.J."/>
            <person name="Gent M.E."/>
            <person name="Ghazvini M."/>
            <person name="Goffeau A."/>
            <person name="Gonzalez A."/>
            <person name="Grothues D."/>
            <person name="Guerreiro P."/>
            <person name="Hegemann J.H."/>
            <person name="Hewitt N."/>
            <person name="Hilger F."/>
            <person name="Hollenberg C.P."/>
            <person name="Horaitis O."/>
            <person name="Indge K.J."/>
            <person name="Jacquier A."/>
            <person name="James C.M."/>
            <person name="Jauniaux J.-C."/>
            <person name="Jimenez A."/>
            <person name="Keuchel H."/>
            <person name="Kirchrath L."/>
            <person name="Kleine K."/>
            <person name="Koetter P."/>
            <person name="Legrain P."/>
            <person name="Liebl S."/>
            <person name="Louis E.J."/>
            <person name="Maia e Silva A."/>
            <person name="Marck C."/>
            <person name="Monnier A.-L."/>
            <person name="Moestl D."/>
            <person name="Mueller S."/>
            <person name="Obermaier B."/>
            <person name="Oliver S.G."/>
            <person name="Pallier C."/>
            <person name="Pascolo S."/>
            <person name="Pfeiffer F."/>
            <person name="Philippsen P."/>
            <person name="Planta R.J."/>
            <person name="Pohl F.M."/>
            <person name="Pohl T.M."/>
            <person name="Poehlmann R."/>
            <person name="Portetelle D."/>
            <person name="Purnelle B."/>
            <person name="Puzos V."/>
            <person name="Ramezani Rad M."/>
            <person name="Rasmussen S.W."/>
            <person name="Remacha M.A."/>
            <person name="Revuelta J.L."/>
            <person name="Richard G.-F."/>
            <person name="Rieger M."/>
            <person name="Rodrigues-Pousada C."/>
            <person name="Rose M."/>
            <person name="Rupp T."/>
            <person name="Santos M.A."/>
            <person name="Schwager C."/>
            <person name="Sensen C."/>
            <person name="Skala J."/>
            <person name="Soares H."/>
            <person name="Sor F."/>
            <person name="Stegemann J."/>
            <person name="Tettelin H."/>
            <person name="Thierry A."/>
            <person name="Tzermia M."/>
            <person name="Urrestarazu L.A."/>
            <person name="van Dyck L."/>
            <person name="van Vliet-Reedijk J.C."/>
            <person name="Valens M."/>
            <person name="Vandenbol M."/>
            <person name="Vilela C."/>
            <person name="Vissers S."/>
            <person name="von Wettstein D."/>
            <person name="Voss H."/>
            <person name="Wiemann S."/>
            <person name="Xu G."/>
            <person name="Zimmermann J."/>
            <person name="Haasemann M."/>
            <person name="Becker I."/>
            <person name="Mewes H.-W."/>
        </authorList>
    </citation>
    <scope>NUCLEOTIDE SEQUENCE [LARGE SCALE GENOMIC DNA]</scope>
    <source>
        <strain>ATCC 204508 / S288c</strain>
    </source>
</reference>
<reference key="3">
    <citation type="journal article" date="2014" name="G3 (Bethesda)">
        <title>The reference genome sequence of Saccharomyces cerevisiae: Then and now.</title>
        <authorList>
            <person name="Engel S.R."/>
            <person name="Dietrich F.S."/>
            <person name="Fisk D.G."/>
            <person name="Binkley G."/>
            <person name="Balakrishnan R."/>
            <person name="Costanzo M.C."/>
            <person name="Dwight S.S."/>
            <person name="Hitz B.C."/>
            <person name="Karra K."/>
            <person name="Nash R.S."/>
            <person name="Weng S."/>
            <person name="Wong E.D."/>
            <person name="Lloyd P."/>
            <person name="Skrzypek M.S."/>
            <person name="Miyasato S.R."/>
            <person name="Simison M."/>
            <person name="Cherry J.M."/>
        </authorList>
    </citation>
    <scope>GENOME REANNOTATION</scope>
    <source>
        <strain>ATCC 204508 / S288c</strain>
    </source>
</reference>
<reference key="4">
    <citation type="journal article" date="2007" name="Genome Res.">
        <title>Approaching a complete repository of sequence-verified protein-encoding clones for Saccharomyces cerevisiae.</title>
        <authorList>
            <person name="Hu Y."/>
            <person name="Rolfs A."/>
            <person name="Bhullar B."/>
            <person name="Murthy T.V.S."/>
            <person name="Zhu C."/>
            <person name="Berger M.F."/>
            <person name="Camargo A.A."/>
            <person name="Kelley F."/>
            <person name="McCarron S."/>
            <person name="Jepson D."/>
            <person name="Richardson A."/>
            <person name="Raphael J."/>
            <person name="Moreira D."/>
            <person name="Taycher E."/>
            <person name="Zuo D."/>
            <person name="Mohr S."/>
            <person name="Kane M.F."/>
            <person name="Williamson J."/>
            <person name="Simpson A.J.G."/>
            <person name="Bulyk M.L."/>
            <person name="Harlow E."/>
            <person name="Marsischky G."/>
            <person name="Kolodner R.D."/>
            <person name="LaBaer J."/>
        </authorList>
    </citation>
    <scope>NUCLEOTIDE SEQUENCE [GENOMIC DNA]</scope>
    <source>
        <strain>ATCC 204508 / S288c</strain>
    </source>
</reference>
<reference key="5">
    <citation type="journal article" date="2003" name="Nature">
        <title>Global analysis of protein localization in budding yeast.</title>
        <authorList>
            <person name="Huh W.-K."/>
            <person name="Falvo J.V."/>
            <person name="Gerke L.C."/>
            <person name="Carroll A.S."/>
            <person name="Howson R.W."/>
            <person name="Weissman J.S."/>
            <person name="O'Shea E.K."/>
        </authorList>
    </citation>
    <scope>SUBCELLULAR LOCATION [LARGE SCALE ANALYSIS]</scope>
</reference>
<accession>P36086</accession>
<accession>D6VXL5</accession>
<feature type="chain" id="PRO_0000203171" description="Uncharacterized oxidoreductase YKL071W">
    <location>
        <begin position="1"/>
        <end position="256"/>
    </location>
</feature>
<feature type="active site" description="Proton donor" evidence="2">
    <location>
        <position position="164"/>
    </location>
</feature>
<feature type="active site" description="Lowers pKa of active site Tyr" evidence="2">
    <location>
        <position position="168"/>
    </location>
</feature>
<feature type="binding site" evidence="1">
    <location>
        <position position="18"/>
    </location>
    <ligand>
        <name>NADP(+)</name>
        <dbReference type="ChEBI" id="CHEBI:58349"/>
    </ligand>
</feature>
<feature type="binding site" evidence="1">
    <location>
        <position position="37"/>
    </location>
    <ligand>
        <name>NADP(+)</name>
        <dbReference type="ChEBI" id="CHEBI:58349"/>
    </ligand>
</feature>
<feature type="binding site" evidence="1">
    <location>
        <position position="46"/>
    </location>
    <ligand>
        <name>NADP(+)</name>
        <dbReference type="ChEBI" id="CHEBI:58349"/>
    </ligand>
</feature>
<feature type="binding site" evidence="1">
    <location>
        <position position="66"/>
    </location>
    <ligand>
        <name>NADP(+)</name>
        <dbReference type="ChEBI" id="CHEBI:58349"/>
    </ligand>
</feature>
<feature type="binding site" evidence="2">
    <location>
        <position position="164"/>
    </location>
    <ligand>
        <name>NADP(+)</name>
        <dbReference type="ChEBI" id="CHEBI:58349"/>
    </ligand>
</feature>
<feature type="binding site" evidence="2">
    <location>
        <position position="168"/>
    </location>
    <ligand>
        <name>NADP(+)</name>
        <dbReference type="ChEBI" id="CHEBI:58349"/>
    </ligand>
</feature>
<feature type="binding site" evidence="2">
    <location>
        <position position="197"/>
    </location>
    <ligand>
        <name>NADP(+)</name>
        <dbReference type="ChEBI" id="CHEBI:58349"/>
    </ligand>
</feature>
<feature type="binding site" evidence="1">
    <location>
        <position position="199"/>
    </location>
    <ligand>
        <name>NADP(+)</name>
        <dbReference type="ChEBI" id="CHEBI:58349"/>
    </ligand>
</feature>